<comment type="function">
    <text evidence="2">Part of the small subunit (SSU) processome, first precursor of the small eukaryotic ribosomal subunit. During the assembly of the SSU processome in the nucleolus, many ribosome biogenesis factors, an RNA chaperone and ribosomal proteins associate with the nascent pre-rRNA and work in concert to generate RNA folding, modifications, rearrangements and cleavage as well as targeted degradation of pre-ribosomal RNA by the RNA exosome.</text>
</comment>
<comment type="subunit">
    <text evidence="2">Part of the small subunit (SSU) processome, composed of more than 70 proteins and the RNA chaperone small nucleolar RNA (snoRNA) U3.</text>
</comment>
<comment type="subcellular location">
    <subcellularLocation>
        <location evidence="2">Nucleus</location>
        <location evidence="2">Nucleolus</location>
    </subcellularLocation>
    <subcellularLocation>
        <location evidence="1">Chromosome</location>
    </subcellularLocation>
    <text evidence="1">Localizes to condensed chromosomes in mitosis.</text>
</comment>
<comment type="tissue specificity">
    <text evidence="7">Expressed in nurse cells at stages 9-10 of oogenesis and exported to the oocyte.</text>
</comment>
<comment type="developmental stage">
    <text evidence="7">Expressed both maternally and zygotically.</text>
</comment>
<comment type="similarity">
    <text evidence="3">Belongs to the NRAP family.</text>
</comment>
<feature type="chain" id="PRO_0000383624" description="Nucleolar protein 6">
    <location>
        <begin position="1"/>
        <end position="1193"/>
    </location>
</feature>
<feature type="region of interest" description="Disordered" evidence="4">
    <location>
        <begin position="1"/>
        <end position="69"/>
    </location>
</feature>
<feature type="region of interest" description="Disordered" evidence="4">
    <location>
        <begin position="1137"/>
        <end position="1193"/>
    </location>
</feature>
<feature type="compositionally biased region" description="Basic and acidic residues" evidence="4">
    <location>
        <begin position="31"/>
        <end position="46"/>
    </location>
</feature>
<feature type="compositionally biased region" description="Basic and acidic residues" evidence="4">
    <location>
        <begin position="1151"/>
        <end position="1161"/>
    </location>
</feature>
<feature type="compositionally biased region" description="Basic residues" evidence="4">
    <location>
        <begin position="1162"/>
        <end position="1184"/>
    </location>
</feature>
<feature type="modified residue" description="Phosphoserine" evidence="6">
    <location>
        <position position="35"/>
    </location>
</feature>
<gene>
    <name evidence="8" type="primary">Mat89Ba</name>
    <name type="ORF">CG12785</name>
</gene>
<protein>
    <recommendedName>
        <fullName evidence="2">Nucleolar protein 6</fullName>
    </recommendedName>
    <alternativeName>
        <fullName evidence="8">Maternal transcript 89Ba</fullName>
    </alternativeName>
</protein>
<sequence length="1193" mass="136385">MRFVQGNIMPGKLVGSPKGAARTGTQAIAHAGDHSDLDEPKPKIAKSDPPSTAIPKKNNFKQREGTKNVKPPTLEEMKELRDTQNLFHSNLFKLQVKEMLEELQLKQKYTDFIENWLESFTAFTRQLKDGLMERTHLEVPMKLSEKPTGFVFSKPTREPYLIGAAATGTLLGPKIVVDVALEMPKESLHKEDYLNLRYDQKRALYLTYVTERMMESPDYAEDQFNFNYYANNPLKPVLELIPVTKQVNKHLQVRLFITAPLSSFKPGRFVPWNNNIRPSFYGDEWDEKDPLPSTQHYNANVLFDLTLSENQAQLDKAFKSRRNFQDGLLLLKVWLRQRQLDIGYSGFGAHILAAFIVYLNTQRILHQSSSSYQVARTVWNQLANTDWTKGISLSVAPIQTEELNKFAEHYDVCFIDFTGQHNLCANIPLYLYQRVREEAKLAVELLNDMKLNSFPLIFMQKCPLYSRVDNILKISNYSCINQMLTLHSHPRIKYDFANYGYPQLLHLLTELLKKGLAERVHSILPLETATAAWPVEKKAPVIGKYIQLGLILQPEHAYQVLNKGPAANDDHEGAEEFRRFWGEKSNLRRFQDGSITEAVVWGTAQDSPAKKRLIVRQIVLHLLEHHLQLDSKEVQYIGGELDQVYQLSPWFKVNKLKTKLPLGQDTDAEALSPHVIRCYDELARQLHGLNDLPLEIVSISGVSPIFRYCEPQPVLPQALLVENRILASSIQRVVIQLGQSGKWPTELGALRALKTAFLIEIGEKLEAQCRLHWVMSADGLLVLKQGYCFLIELAHNKELALLKQEVTERGITTYIDNAASRSLERQHYILPKVSGALHSLHQTYSAFGSTVLLAKRWLATQLLDDGLWPDMATELLVAHLFQQRYAPQSIAAPQTGFIRFLQLLSHSDFNGELFLLNFNNSWQEQQIADLEHNYRSNRQSYPPLAVATSYDMQHAGRLWTSDQSPSQRVLGHVTRLARHALEIIETSLMSKDLRFVRPAQLFRASNEGYDLVIQFKPDLVPNSLSYDLGSPFVSFSQPNFSLPRAGSDYIARIVGLLRSAYSDFAAFFYNPHGGKELGIVWRPPTEFAAKPFKVTELQACSPCGNKKVQVLKETLLEDFKLLLKDFYLRIATPEELKREQREHQKPMRYFDANKAEEESKPKPKKHRQRKGTGKKALPKRKRLIKSSTLKVLK</sequence>
<proteinExistence type="evidence at protein level"/>
<evidence type="ECO:0000250" key="1">
    <source>
        <dbReference type="UniProtKB" id="Q8R5K4"/>
    </source>
</evidence>
<evidence type="ECO:0000250" key="2">
    <source>
        <dbReference type="UniProtKB" id="Q9H6R4"/>
    </source>
</evidence>
<evidence type="ECO:0000255" key="3"/>
<evidence type="ECO:0000256" key="4">
    <source>
        <dbReference type="SAM" id="MobiDB-lite"/>
    </source>
</evidence>
<evidence type="ECO:0000269" key="5">
    <source>
    </source>
</evidence>
<evidence type="ECO:0000269" key="6">
    <source>
    </source>
</evidence>
<evidence type="ECO:0000269" key="7">
    <source>
    </source>
</evidence>
<evidence type="ECO:0000303" key="8">
    <source>
    </source>
</evidence>
<evidence type="ECO:0000305" key="9"/>
<evidence type="ECO:0000312" key="10">
    <source>
        <dbReference type="EMBL" id="AAF55292.2"/>
    </source>
</evidence>
<evidence type="ECO:0000312" key="11">
    <source>
        <dbReference type="EMBL" id="AAN71266.1"/>
    </source>
</evidence>
<evidence type="ECO:0000312" key="12">
    <source>
        <dbReference type="EMBL" id="AAV36998.1"/>
    </source>
</evidence>
<organism>
    <name type="scientific">Drosophila melanogaster</name>
    <name type="common">Fruit fly</name>
    <dbReference type="NCBI Taxonomy" id="7227"/>
    <lineage>
        <taxon>Eukaryota</taxon>
        <taxon>Metazoa</taxon>
        <taxon>Ecdysozoa</taxon>
        <taxon>Arthropoda</taxon>
        <taxon>Hexapoda</taxon>
        <taxon>Insecta</taxon>
        <taxon>Pterygota</taxon>
        <taxon>Neoptera</taxon>
        <taxon>Endopterygota</taxon>
        <taxon>Diptera</taxon>
        <taxon>Brachycera</taxon>
        <taxon>Muscomorpha</taxon>
        <taxon>Ephydroidea</taxon>
        <taxon>Drosophilidae</taxon>
        <taxon>Drosophila</taxon>
        <taxon>Sophophora</taxon>
    </lineage>
</organism>
<name>NOL6_DROME</name>
<accession>Q8IH00</accession>
<accession>Q9VEX3</accession>
<reference evidence="10" key="1">
    <citation type="journal article" date="2000" name="Science">
        <title>The genome sequence of Drosophila melanogaster.</title>
        <authorList>
            <person name="Adams M.D."/>
            <person name="Celniker S.E."/>
            <person name="Holt R.A."/>
            <person name="Evans C.A."/>
            <person name="Gocayne J.D."/>
            <person name="Amanatides P.G."/>
            <person name="Scherer S.E."/>
            <person name="Li P.W."/>
            <person name="Hoskins R.A."/>
            <person name="Galle R.F."/>
            <person name="George R.A."/>
            <person name="Lewis S.E."/>
            <person name="Richards S."/>
            <person name="Ashburner M."/>
            <person name="Henderson S.N."/>
            <person name="Sutton G.G."/>
            <person name="Wortman J.R."/>
            <person name="Yandell M.D."/>
            <person name="Zhang Q."/>
            <person name="Chen L.X."/>
            <person name="Brandon R.C."/>
            <person name="Rogers Y.-H.C."/>
            <person name="Blazej R.G."/>
            <person name="Champe M."/>
            <person name="Pfeiffer B.D."/>
            <person name="Wan K.H."/>
            <person name="Doyle C."/>
            <person name="Baxter E.G."/>
            <person name="Helt G."/>
            <person name="Nelson C.R."/>
            <person name="Miklos G.L.G."/>
            <person name="Abril J.F."/>
            <person name="Agbayani A."/>
            <person name="An H.-J."/>
            <person name="Andrews-Pfannkoch C."/>
            <person name="Baldwin D."/>
            <person name="Ballew R.M."/>
            <person name="Basu A."/>
            <person name="Baxendale J."/>
            <person name="Bayraktaroglu L."/>
            <person name="Beasley E.M."/>
            <person name="Beeson K.Y."/>
            <person name="Benos P.V."/>
            <person name="Berman B.P."/>
            <person name="Bhandari D."/>
            <person name="Bolshakov S."/>
            <person name="Borkova D."/>
            <person name="Botchan M.R."/>
            <person name="Bouck J."/>
            <person name="Brokstein P."/>
            <person name="Brottier P."/>
            <person name="Burtis K.C."/>
            <person name="Busam D.A."/>
            <person name="Butler H."/>
            <person name="Cadieu E."/>
            <person name="Center A."/>
            <person name="Chandra I."/>
            <person name="Cherry J.M."/>
            <person name="Cawley S."/>
            <person name="Dahlke C."/>
            <person name="Davenport L.B."/>
            <person name="Davies P."/>
            <person name="de Pablos B."/>
            <person name="Delcher A."/>
            <person name="Deng Z."/>
            <person name="Mays A.D."/>
            <person name="Dew I."/>
            <person name="Dietz S.M."/>
            <person name="Dodson K."/>
            <person name="Doup L.E."/>
            <person name="Downes M."/>
            <person name="Dugan-Rocha S."/>
            <person name="Dunkov B.C."/>
            <person name="Dunn P."/>
            <person name="Durbin K.J."/>
            <person name="Evangelista C.C."/>
            <person name="Ferraz C."/>
            <person name="Ferriera S."/>
            <person name="Fleischmann W."/>
            <person name="Fosler C."/>
            <person name="Gabrielian A.E."/>
            <person name="Garg N.S."/>
            <person name="Gelbart W.M."/>
            <person name="Glasser K."/>
            <person name="Glodek A."/>
            <person name="Gong F."/>
            <person name="Gorrell J.H."/>
            <person name="Gu Z."/>
            <person name="Guan P."/>
            <person name="Harris M."/>
            <person name="Harris N.L."/>
            <person name="Harvey D.A."/>
            <person name="Heiman T.J."/>
            <person name="Hernandez J.R."/>
            <person name="Houck J."/>
            <person name="Hostin D."/>
            <person name="Houston K.A."/>
            <person name="Howland T.J."/>
            <person name="Wei M.-H."/>
            <person name="Ibegwam C."/>
            <person name="Jalali M."/>
            <person name="Kalush F."/>
            <person name="Karpen G.H."/>
            <person name="Ke Z."/>
            <person name="Kennison J.A."/>
            <person name="Ketchum K.A."/>
            <person name="Kimmel B.E."/>
            <person name="Kodira C.D."/>
            <person name="Kraft C.L."/>
            <person name="Kravitz S."/>
            <person name="Kulp D."/>
            <person name="Lai Z."/>
            <person name="Lasko P."/>
            <person name="Lei Y."/>
            <person name="Levitsky A.A."/>
            <person name="Li J.H."/>
            <person name="Li Z."/>
            <person name="Liang Y."/>
            <person name="Lin X."/>
            <person name="Liu X."/>
            <person name="Mattei B."/>
            <person name="McIntosh T.C."/>
            <person name="McLeod M.P."/>
            <person name="McPherson D."/>
            <person name="Merkulov G."/>
            <person name="Milshina N.V."/>
            <person name="Mobarry C."/>
            <person name="Morris J."/>
            <person name="Moshrefi A."/>
            <person name="Mount S.M."/>
            <person name="Moy M."/>
            <person name="Murphy B."/>
            <person name="Murphy L."/>
            <person name="Muzny D.M."/>
            <person name="Nelson D.L."/>
            <person name="Nelson D.R."/>
            <person name="Nelson K.A."/>
            <person name="Nixon K."/>
            <person name="Nusskern D.R."/>
            <person name="Pacleb J.M."/>
            <person name="Palazzolo M."/>
            <person name="Pittman G.S."/>
            <person name="Pan S."/>
            <person name="Pollard J."/>
            <person name="Puri V."/>
            <person name="Reese M.G."/>
            <person name="Reinert K."/>
            <person name="Remington K."/>
            <person name="Saunders R.D.C."/>
            <person name="Scheeler F."/>
            <person name="Shen H."/>
            <person name="Shue B.C."/>
            <person name="Siden-Kiamos I."/>
            <person name="Simpson M."/>
            <person name="Skupski M.P."/>
            <person name="Smith T.J."/>
            <person name="Spier E."/>
            <person name="Spradling A.C."/>
            <person name="Stapleton M."/>
            <person name="Strong R."/>
            <person name="Sun E."/>
            <person name="Svirskas R."/>
            <person name="Tector C."/>
            <person name="Turner R."/>
            <person name="Venter E."/>
            <person name="Wang A.H."/>
            <person name="Wang X."/>
            <person name="Wang Z.-Y."/>
            <person name="Wassarman D.A."/>
            <person name="Weinstock G.M."/>
            <person name="Weissenbach J."/>
            <person name="Williams S.M."/>
            <person name="Woodage T."/>
            <person name="Worley K.C."/>
            <person name="Wu D."/>
            <person name="Yang S."/>
            <person name="Yao Q.A."/>
            <person name="Ye J."/>
            <person name="Yeh R.-F."/>
            <person name="Zaveri J.S."/>
            <person name="Zhan M."/>
            <person name="Zhang G."/>
            <person name="Zhao Q."/>
            <person name="Zheng L."/>
            <person name="Zheng X.H."/>
            <person name="Zhong F.N."/>
            <person name="Zhong W."/>
            <person name="Zhou X."/>
            <person name="Zhu S.C."/>
            <person name="Zhu X."/>
            <person name="Smith H.O."/>
            <person name="Gibbs R.A."/>
            <person name="Myers E.W."/>
            <person name="Rubin G.M."/>
            <person name="Venter J.C."/>
        </authorList>
    </citation>
    <scope>NUCLEOTIDE SEQUENCE [LARGE SCALE GENOMIC DNA]</scope>
    <source>
        <strain>Berkeley</strain>
    </source>
</reference>
<reference evidence="9 10" key="2">
    <citation type="journal article" date="2002" name="Genome Biol.">
        <title>Annotation of the Drosophila melanogaster euchromatic genome: a systematic review.</title>
        <authorList>
            <person name="Misra S."/>
            <person name="Crosby M.A."/>
            <person name="Mungall C.J."/>
            <person name="Matthews B.B."/>
            <person name="Campbell K.S."/>
            <person name="Hradecky P."/>
            <person name="Huang Y."/>
            <person name="Kaminker J.S."/>
            <person name="Millburn G.H."/>
            <person name="Prochnik S.E."/>
            <person name="Smith C.D."/>
            <person name="Tupy J.L."/>
            <person name="Whitfield E.J."/>
            <person name="Bayraktaroglu L."/>
            <person name="Berman B.P."/>
            <person name="Bettencourt B.R."/>
            <person name="Celniker S.E."/>
            <person name="de Grey A.D.N.J."/>
            <person name="Drysdale R.A."/>
            <person name="Harris N.L."/>
            <person name="Richter J."/>
            <person name="Russo S."/>
            <person name="Schroeder A.J."/>
            <person name="Shu S.Q."/>
            <person name="Stapleton M."/>
            <person name="Yamada C."/>
            <person name="Ashburner M."/>
            <person name="Gelbart W.M."/>
            <person name="Rubin G.M."/>
            <person name="Lewis S.E."/>
        </authorList>
    </citation>
    <scope>GENOME REANNOTATION</scope>
    <source>
        <strain>Berkeley</strain>
    </source>
</reference>
<reference evidence="11" key="3">
    <citation type="journal article" date="2002" name="Genome Biol.">
        <title>A Drosophila full-length cDNA resource.</title>
        <authorList>
            <person name="Stapleton M."/>
            <person name="Carlson J.W."/>
            <person name="Brokstein P."/>
            <person name="Yu C."/>
            <person name="Champe M."/>
            <person name="George R.A."/>
            <person name="Guarin H."/>
            <person name="Kronmiller B."/>
            <person name="Pacleb J.M."/>
            <person name="Park S."/>
            <person name="Wan K.H."/>
            <person name="Rubin G.M."/>
            <person name="Celniker S.E."/>
        </authorList>
    </citation>
    <scope>NUCLEOTIDE SEQUENCE [LARGE SCALE MRNA]</scope>
    <source>
        <strain evidence="11">Berkeley</strain>
        <tissue evidence="5">Embryo</tissue>
    </source>
</reference>
<reference evidence="12" key="4">
    <citation type="submission" date="2004-10" db="EMBL/GenBank/DDBJ databases">
        <authorList>
            <person name="Stapleton M."/>
            <person name="Carlson J.W."/>
            <person name="Chavez C."/>
            <person name="Frise E."/>
            <person name="George R.A."/>
            <person name="Pacleb J.M."/>
            <person name="Park S."/>
            <person name="Wan K.H."/>
            <person name="Yu C."/>
            <person name="Rubin G.M."/>
            <person name="Celniker S.E."/>
        </authorList>
    </citation>
    <scope>NUCLEOTIDE SEQUENCE [LARGE SCALE MRNA]</scope>
    <source>
        <strain evidence="12">Berkeley</strain>
        <tissue>Embryo</tissue>
    </source>
</reference>
<reference evidence="9" key="5">
    <citation type="journal article" date="1998" name="Dev. Genes Evol.">
        <title>A testis-specifically expressed gene is embedded within a cluster of maternally expressed genes at 89B in Drosophila melanogaster.</title>
        <authorList>
            <person name="Stebbings L.A."/>
            <person name="Grimes B.R."/>
            <person name="Bownes M."/>
        </authorList>
    </citation>
    <scope>NUCLEOTIDE SEQUENCE [GENOMIC DNA] OF 1094-1193</scope>
    <scope>TISSUE SPECIFICITY</scope>
    <scope>DEVELOPMENTAL STAGE</scope>
</reference>
<reference evidence="9" key="6">
    <citation type="journal article" date="2008" name="J. Proteome Res.">
        <title>Phosphoproteome analysis of Drosophila melanogaster embryos.</title>
        <authorList>
            <person name="Zhai B."/>
            <person name="Villen J."/>
            <person name="Beausoleil S.A."/>
            <person name="Mintseris J."/>
            <person name="Gygi S.P."/>
        </authorList>
    </citation>
    <scope>PHOSPHORYLATION [LARGE SCALE ANALYSIS] AT SER-35</scope>
    <scope>IDENTIFICATION BY MASS SPECTROMETRY</scope>
    <source>
        <tissue evidence="6">Embryo</tissue>
    </source>
</reference>
<keyword id="KW-0158">Chromosome</keyword>
<keyword id="KW-0539">Nucleus</keyword>
<keyword id="KW-0597">Phosphoprotein</keyword>
<keyword id="KW-1185">Reference proteome</keyword>
<keyword id="KW-0694">RNA-binding</keyword>
<dbReference type="EMBL" id="AE014297">
    <property type="protein sequence ID" value="AAF55292.2"/>
    <property type="molecule type" value="Genomic_DNA"/>
</dbReference>
<dbReference type="EMBL" id="BT001511">
    <property type="protein sequence ID" value="AAN71266.1"/>
    <property type="molecule type" value="mRNA"/>
</dbReference>
<dbReference type="EMBL" id="BT016113">
    <property type="protein sequence ID" value="AAV36998.1"/>
    <property type="molecule type" value="mRNA"/>
</dbReference>
<dbReference type="EMBL" id="U47618">
    <property type="status" value="NOT_ANNOTATED_CDS"/>
    <property type="molecule type" value="Genomic_DNA"/>
</dbReference>
<dbReference type="RefSeq" id="NP_650530.2">
    <property type="nucleotide sequence ID" value="NM_142273.4"/>
</dbReference>
<dbReference type="SMR" id="Q8IH00"/>
<dbReference type="BioGRID" id="67021">
    <property type="interactions" value="6"/>
</dbReference>
<dbReference type="FunCoup" id="Q8IH00">
    <property type="interactions" value="1657"/>
</dbReference>
<dbReference type="IntAct" id="Q8IH00">
    <property type="interactions" value="33"/>
</dbReference>
<dbReference type="STRING" id="7227.FBpp0082727"/>
<dbReference type="iPTMnet" id="Q8IH00"/>
<dbReference type="PaxDb" id="7227-FBpp0082727"/>
<dbReference type="DNASU" id="41973"/>
<dbReference type="EnsemblMetazoa" id="FBtr0083275">
    <property type="protein sequence ID" value="FBpp0082727"/>
    <property type="gene ID" value="FBgn0261286"/>
</dbReference>
<dbReference type="GeneID" id="41973"/>
<dbReference type="KEGG" id="dme:Dmel_CG12785"/>
<dbReference type="UCSC" id="CG12785-RA">
    <property type="organism name" value="d. melanogaster"/>
</dbReference>
<dbReference type="AGR" id="FB:FBgn0261286"/>
<dbReference type="CTD" id="41973"/>
<dbReference type="FlyBase" id="FBgn0261286">
    <property type="gene designation" value="Mat89Ba"/>
</dbReference>
<dbReference type="VEuPathDB" id="VectorBase:FBgn0261286"/>
<dbReference type="eggNOG" id="KOG2054">
    <property type="taxonomic scope" value="Eukaryota"/>
</dbReference>
<dbReference type="GeneTree" id="ENSGT00390000018619"/>
<dbReference type="HOGENOM" id="CLU_003502_0_1_1"/>
<dbReference type="InParanoid" id="Q8IH00"/>
<dbReference type="OMA" id="NPHGGKE"/>
<dbReference type="OrthoDB" id="10251401at2759"/>
<dbReference type="PhylomeDB" id="Q8IH00"/>
<dbReference type="Reactome" id="R-DME-6791226">
    <property type="pathway name" value="Major pathway of rRNA processing in the nucleolus and cytosol"/>
</dbReference>
<dbReference type="SignaLink" id="Q8IH00"/>
<dbReference type="BioGRID-ORCS" id="41973">
    <property type="hits" value="0 hits in 1 CRISPR screen"/>
</dbReference>
<dbReference type="GenomeRNAi" id="41973"/>
<dbReference type="PRO" id="PR:Q8IH00"/>
<dbReference type="Proteomes" id="UP000000803">
    <property type="component" value="Chromosome 3R"/>
</dbReference>
<dbReference type="Bgee" id="FBgn0261286">
    <property type="expression patterns" value="Expressed in posterior terminal follicle cell in ovary and 53 other cell types or tissues"/>
</dbReference>
<dbReference type="GO" id="GO:0000794">
    <property type="term" value="C:condensed nuclear chromosome"/>
    <property type="evidence" value="ECO:0000250"/>
    <property type="project" value="UniProtKB"/>
</dbReference>
<dbReference type="GO" id="GO:0032545">
    <property type="term" value="C:CURI complex"/>
    <property type="evidence" value="ECO:0000318"/>
    <property type="project" value="GO_Central"/>
</dbReference>
<dbReference type="GO" id="GO:0005730">
    <property type="term" value="C:nucleolus"/>
    <property type="evidence" value="ECO:0000250"/>
    <property type="project" value="FlyBase"/>
</dbReference>
<dbReference type="GO" id="GO:0032040">
    <property type="term" value="C:small-subunit processome"/>
    <property type="evidence" value="ECO:0000250"/>
    <property type="project" value="UniProtKB"/>
</dbReference>
<dbReference type="GO" id="GO:0034456">
    <property type="term" value="C:UTP-C complex"/>
    <property type="evidence" value="ECO:0000318"/>
    <property type="project" value="GO_Central"/>
</dbReference>
<dbReference type="GO" id="GO:0003723">
    <property type="term" value="F:RNA binding"/>
    <property type="evidence" value="ECO:0000250"/>
    <property type="project" value="FlyBase"/>
</dbReference>
<dbReference type="GO" id="GO:0042274">
    <property type="term" value="P:ribosomal small subunit biogenesis"/>
    <property type="evidence" value="ECO:0000250"/>
    <property type="project" value="UniProtKB"/>
</dbReference>
<dbReference type="GO" id="GO:0006364">
    <property type="term" value="P:rRNA processing"/>
    <property type="evidence" value="ECO:0000250"/>
    <property type="project" value="FlyBase"/>
</dbReference>
<dbReference type="GO" id="GO:0006409">
    <property type="term" value="P:tRNA export from nucleus"/>
    <property type="evidence" value="ECO:0000318"/>
    <property type="project" value="GO_Central"/>
</dbReference>
<dbReference type="FunFam" id="1.10.1410.10:FF:000005">
    <property type="entry name" value="Nucleolar protein 6"/>
    <property type="match status" value="1"/>
</dbReference>
<dbReference type="FunFam" id="1.10.1410.10:FF:000006">
    <property type="entry name" value="Nucleolar protein 6"/>
    <property type="match status" value="1"/>
</dbReference>
<dbReference type="Gene3D" id="1.10.1410.10">
    <property type="match status" value="2"/>
</dbReference>
<dbReference type="Gene3D" id="3.30.70.3030">
    <property type="match status" value="1"/>
</dbReference>
<dbReference type="InterPro" id="IPR005554">
    <property type="entry name" value="NOL6/Upt22"/>
</dbReference>
<dbReference type="InterPro" id="IPR035082">
    <property type="entry name" value="Nrap_D1"/>
</dbReference>
<dbReference type="InterPro" id="IPR035367">
    <property type="entry name" value="Nrap_D2"/>
</dbReference>
<dbReference type="InterPro" id="IPR035368">
    <property type="entry name" value="Nrap_D3"/>
</dbReference>
<dbReference type="InterPro" id="IPR035369">
    <property type="entry name" value="Nrap_D4"/>
</dbReference>
<dbReference type="InterPro" id="IPR035370">
    <property type="entry name" value="Nrap_D5"/>
</dbReference>
<dbReference type="InterPro" id="IPR035371">
    <property type="entry name" value="Nrap_D6"/>
</dbReference>
<dbReference type="PANTHER" id="PTHR17972:SF0">
    <property type="entry name" value="NUCLEOLAR PROTEIN 6"/>
    <property type="match status" value="1"/>
</dbReference>
<dbReference type="PANTHER" id="PTHR17972">
    <property type="entry name" value="NUCLEOLAR RNA-ASSOCIATED PROTEIN"/>
    <property type="match status" value="1"/>
</dbReference>
<dbReference type="Pfam" id="PF03813">
    <property type="entry name" value="Nrap"/>
    <property type="match status" value="1"/>
</dbReference>
<dbReference type="Pfam" id="PF17403">
    <property type="entry name" value="Nrap_D2"/>
    <property type="match status" value="1"/>
</dbReference>
<dbReference type="Pfam" id="PF17404">
    <property type="entry name" value="Nrap_D3"/>
    <property type="match status" value="1"/>
</dbReference>
<dbReference type="Pfam" id="PF17405">
    <property type="entry name" value="Nrap_D4"/>
    <property type="match status" value="1"/>
</dbReference>
<dbReference type="Pfam" id="PF17406">
    <property type="entry name" value="Nrap_D5"/>
    <property type="match status" value="1"/>
</dbReference>
<dbReference type="Pfam" id="PF17407">
    <property type="entry name" value="Nrap_D6"/>
    <property type="match status" value="1"/>
</dbReference>